<reference key="1">
    <citation type="journal article" date="2009" name="PLoS Genet.">
        <title>Organised genome dynamics in the Escherichia coli species results in highly diverse adaptive paths.</title>
        <authorList>
            <person name="Touchon M."/>
            <person name="Hoede C."/>
            <person name="Tenaillon O."/>
            <person name="Barbe V."/>
            <person name="Baeriswyl S."/>
            <person name="Bidet P."/>
            <person name="Bingen E."/>
            <person name="Bonacorsi S."/>
            <person name="Bouchier C."/>
            <person name="Bouvet O."/>
            <person name="Calteau A."/>
            <person name="Chiapello H."/>
            <person name="Clermont O."/>
            <person name="Cruveiller S."/>
            <person name="Danchin A."/>
            <person name="Diard M."/>
            <person name="Dossat C."/>
            <person name="Karoui M.E."/>
            <person name="Frapy E."/>
            <person name="Garry L."/>
            <person name="Ghigo J.M."/>
            <person name="Gilles A.M."/>
            <person name="Johnson J."/>
            <person name="Le Bouguenec C."/>
            <person name="Lescat M."/>
            <person name="Mangenot S."/>
            <person name="Martinez-Jehanne V."/>
            <person name="Matic I."/>
            <person name="Nassif X."/>
            <person name="Oztas S."/>
            <person name="Petit M.A."/>
            <person name="Pichon C."/>
            <person name="Rouy Z."/>
            <person name="Ruf C.S."/>
            <person name="Schneider D."/>
            <person name="Tourret J."/>
            <person name="Vacherie B."/>
            <person name="Vallenet D."/>
            <person name="Medigue C."/>
            <person name="Rocha E.P.C."/>
            <person name="Denamur E."/>
        </authorList>
    </citation>
    <scope>NUCLEOTIDE SEQUENCE [LARGE SCALE GENOMIC DNA]</scope>
    <source>
        <strain>IAI39 / ExPEC</strain>
    </source>
</reference>
<accession>B7NP10</accession>
<protein>
    <recommendedName>
        <fullName evidence="1">Chorismate synthase</fullName>
        <shortName evidence="1">CS</shortName>
        <ecNumber evidence="1">4.2.3.5</ecNumber>
    </recommendedName>
    <alternativeName>
        <fullName evidence="1">5-enolpyruvylshikimate-3-phosphate phospholyase</fullName>
    </alternativeName>
</protein>
<evidence type="ECO:0000255" key="1">
    <source>
        <dbReference type="HAMAP-Rule" id="MF_00300"/>
    </source>
</evidence>
<proteinExistence type="inferred from homology"/>
<dbReference type="EC" id="4.2.3.5" evidence="1"/>
<dbReference type="EMBL" id="CU928164">
    <property type="protein sequence ID" value="CAR18604.1"/>
    <property type="molecule type" value="Genomic_DNA"/>
</dbReference>
<dbReference type="RefSeq" id="WP_012602414.1">
    <property type="nucleotide sequence ID" value="NC_011750.1"/>
</dbReference>
<dbReference type="RefSeq" id="YP_002408434.1">
    <property type="nucleotide sequence ID" value="NC_011750.1"/>
</dbReference>
<dbReference type="SMR" id="B7NP10"/>
<dbReference type="STRING" id="585057.ECIAI39_2478"/>
<dbReference type="KEGG" id="ect:ECIAI39_2478"/>
<dbReference type="PATRIC" id="fig|585057.6.peg.2582"/>
<dbReference type="HOGENOM" id="CLU_034547_0_2_6"/>
<dbReference type="UniPathway" id="UPA00053">
    <property type="reaction ID" value="UER00090"/>
</dbReference>
<dbReference type="Proteomes" id="UP000000749">
    <property type="component" value="Chromosome"/>
</dbReference>
<dbReference type="GO" id="GO:0005829">
    <property type="term" value="C:cytosol"/>
    <property type="evidence" value="ECO:0007669"/>
    <property type="project" value="TreeGrafter"/>
</dbReference>
<dbReference type="GO" id="GO:0004107">
    <property type="term" value="F:chorismate synthase activity"/>
    <property type="evidence" value="ECO:0007669"/>
    <property type="project" value="UniProtKB-UniRule"/>
</dbReference>
<dbReference type="GO" id="GO:0010181">
    <property type="term" value="F:FMN binding"/>
    <property type="evidence" value="ECO:0007669"/>
    <property type="project" value="TreeGrafter"/>
</dbReference>
<dbReference type="GO" id="GO:0008652">
    <property type="term" value="P:amino acid biosynthetic process"/>
    <property type="evidence" value="ECO:0007669"/>
    <property type="project" value="UniProtKB-KW"/>
</dbReference>
<dbReference type="GO" id="GO:0009073">
    <property type="term" value="P:aromatic amino acid family biosynthetic process"/>
    <property type="evidence" value="ECO:0007669"/>
    <property type="project" value="UniProtKB-KW"/>
</dbReference>
<dbReference type="GO" id="GO:0009423">
    <property type="term" value="P:chorismate biosynthetic process"/>
    <property type="evidence" value="ECO:0007669"/>
    <property type="project" value="UniProtKB-UniRule"/>
</dbReference>
<dbReference type="CDD" id="cd07304">
    <property type="entry name" value="Chorismate_synthase"/>
    <property type="match status" value="1"/>
</dbReference>
<dbReference type="FunFam" id="3.60.150.10:FF:000001">
    <property type="entry name" value="Chorismate synthase"/>
    <property type="match status" value="1"/>
</dbReference>
<dbReference type="Gene3D" id="3.60.150.10">
    <property type="entry name" value="Chorismate synthase AroC"/>
    <property type="match status" value="1"/>
</dbReference>
<dbReference type="HAMAP" id="MF_00300">
    <property type="entry name" value="Chorismate_synth"/>
    <property type="match status" value="1"/>
</dbReference>
<dbReference type="InterPro" id="IPR000453">
    <property type="entry name" value="Chorismate_synth"/>
</dbReference>
<dbReference type="InterPro" id="IPR035904">
    <property type="entry name" value="Chorismate_synth_AroC_sf"/>
</dbReference>
<dbReference type="InterPro" id="IPR020541">
    <property type="entry name" value="Chorismate_synthase_CS"/>
</dbReference>
<dbReference type="NCBIfam" id="TIGR00033">
    <property type="entry name" value="aroC"/>
    <property type="match status" value="1"/>
</dbReference>
<dbReference type="NCBIfam" id="NF003793">
    <property type="entry name" value="PRK05382.1"/>
    <property type="match status" value="1"/>
</dbReference>
<dbReference type="PANTHER" id="PTHR21085">
    <property type="entry name" value="CHORISMATE SYNTHASE"/>
    <property type="match status" value="1"/>
</dbReference>
<dbReference type="PANTHER" id="PTHR21085:SF0">
    <property type="entry name" value="CHORISMATE SYNTHASE"/>
    <property type="match status" value="1"/>
</dbReference>
<dbReference type="Pfam" id="PF01264">
    <property type="entry name" value="Chorismate_synt"/>
    <property type="match status" value="1"/>
</dbReference>
<dbReference type="PIRSF" id="PIRSF001456">
    <property type="entry name" value="Chorismate_synth"/>
    <property type="match status" value="1"/>
</dbReference>
<dbReference type="SUPFAM" id="SSF103263">
    <property type="entry name" value="Chorismate synthase, AroC"/>
    <property type="match status" value="1"/>
</dbReference>
<dbReference type="PROSITE" id="PS00787">
    <property type="entry name" value="CHORISMATE_SYNTHASE_1"/>
    <property type="match status" value="1"/>
</dbReference>
<dbReference type="PROSITE" id="PS00788">
    <property type="entry name" value="CHORISMATE_SYNTHASE_2"/>
    <property type="match status" value="1"/>
</dbReference>
<dbReference type="PROSITE" id="PS00789">
    <property type="entry name" value="CHORISMATE_SYNTHASE_3"/>
    <property type="match status" value="1"/>
</dbReference>
<comment type="function">
    <text evidence="1">Catalyzes the anti-1,4-elimination of the C-3 phosphate and the C-6 proR hydrogen from 5-enolpyruvylshikimate-3-phosphate (EPSP) to yield chorismate, which is the branch point compound that serves as the starting substrate for the three terminal pathways of aromatic amino acid biosynthesis. This reaction introduces a second double bond into the aromatic ring system.</text>
</comment>
<comment type="catalytic activity">
    <reaction evidence="1">
        <text>5-O-(1-carboxyvinyl)-3-phosphoshikimate = chorismate + phosphate</text>
        <dbReference type="Rhea" id="RHEA:21020"/>
        <dbReference type="ChEBI" id="CHEBI:29748"/>
        <dbReference type="ChEBI" id="CHEBI:43474"/>
        <dbReference type="ChEBI" id="CHEBI:57701"/>
        <dbReference type="EC" id="4.2.3.5"/>
    </reaction>
</comment>
<comment type="cofactor">
    <cofactor evidence="1">
        <name>FMNH2</name>
        <dbReference type="ChEBI" id="CHEBI:57618"/>
    </cofactor>
    <text evidence="1">Reduced FMN (FMNH(2)).</text>
</comment>
<comment type="pathway">
    <text evidence="1">Metabolic intermediate biosynthesis; chorismate biosynthesis; chorismate from D-erythrose 4-phosphate and phosphoenolpyruvate: step 7/7.</text>
</comment>
<comment type="subunit">
    <text evidence="1">Homotetramer.</text>
</comment>
<comment type="similarity">
    <text evidence="1">Belongs to the chorismate synthase family.</text>
</comment>
<gene>
    <name evidence="1" type="primary">aroC</name>
    <name type="ordered locus">ECIAI39_2478</name>
</gene>
<sequence>MAGNTIGQLFRVTTFGESHGLALGCIVDGVPPGIPLTEADLQHDLDRRRPGTSRYTTQRREPDQVKILSGIFEGVTTGTSIGLLIENTDQRSQDYSAIKDVFRPGHADYTYEQKYGLRDYRGGGRSSARETAMRVAAGAIAKKYLAEKFGIEIRGCLTQMGDIPLEIKDWSQVEQNPFFCPDPDKIDALDELMRALKKEGDSIGAKVTVVASGVPAGLGEPVFDRLDADIAHALMSINAVKGVEIGDGFDVVALRGSQNRDEITKDGFQSNHAGGILGGISSGQQIIAHMALKPTSSITVPGRTINRFGEEVEMITKGRHDPCVGIRAVPIAEAMLAIVLMDHLLRQRAQNADVKTDIPRW</sequence>
<name>AROC_ECO7I</name>
<organism>
    <name type="scientific">Escherichia coli O7:K1 (strain IAI39 / ExPEC)</name>
    <dbReference type="NCBI Taxonomy" id="585057"/>
    <lineage>
        <taxon>Bacteria</taxon>
        <taxon>Pseudomonadati</taxon>
        <taxon>Pseudomonadota</taxon>
        <taxon>Gammaproteobacteria</taxon>
        <taxon>Enterobacterales</taxon>
        <taxon>Enterobacteriaceae</taxon>
        <taxon>Escherichia</taxon>
    </lineage>
</organism>
<feature type="chain" id="PRO_1000119490" description="Chorismate synthase">
    <location>
        <begin position="1"/>
        <end position="361"/>
    </location>
</feature>
<feature type="binding site" evidence="1">
    <location>
        <position position="48"/>
    </location>
    <ligand>
        <name>NADP(+)</name>
        <dbReference type="ChEBI" id="CHEBI:58349"/>
    </ligand>
</feature>
<feature type="binding site" evidence="1">
    <location>
        <position position="54"/>
    </location>
    <ligand>
        <name>NADP(+)</name>
        <dbReference type="ChEBI" id="CHEBI:58349"/>
    </ligand>
</feature>
<feature type="binding site" evidence="1">
    <location>
        <begin position="125"/>
        <end position="127"/>
    </location>
    <ligand>
        <name>FMN</name>
        <dbReference type="ChEBI" id="CHEBI:58210"/>
    </ligand>
</feature>
<feature type="binding site" evidence="1">
    <location>
        <begin position="238"/>
        <end position="239"/>
    </location>
    <ligand>
        <name>FMN</name>
        <dbReference type="ChEBI" id="CHEBI:58210"/>
    </ligand>
</feature>
<feature type="binding site" evidence="1">
    <location>
        <position position="278"/>
    </location>
    <ligand>
        <name>FMN</name>
        <dbReference type="ChEBI" id="CHEBI:58210"/>
    </ligand>
</feature>
<feature type="binding site" evidence="1">
    <location>
        <begin position="293"/>
        <end position="297"/>
    </location>
    <ligand>
        <name>FMN</name>
        <dbReference type="ChEBI" id="CHEBI:58210"/>
    </ligand>
</feature>
<feature type="binding site" evidence="1">
    <location>
        <position position="319"/>
    </location>
    <ligand>
        <name>FMN</name>
        <dbReference type="ChEBI" id="CHEBI:58210"/>
    </ligand>
</feature>
<keyword id="KW-0028">Amino-acid biosynthesis</keyword>
<keyword id="KW-0057">Aromatic amino acid biosynthesis</keyword>
<keyword id="KW-0274">FAD</keyword>
<keyword id="KW-0285">Flavoprotein</keyword>
<keyword id="KW-0288">FMN</keyword>
<keyword id="KW-0456">Lyase</keyword>
<keyword id="KW-0521">NADP</keyword>